<proteinExistence type="evidence at protein level"/>
<protein>
    <recommendedName>
        <fullName>Ribonuclease pancreatic</fullName>
        <ecNumber>4.6.1.18</ecNumber>
    </recommendedName>
    <alternativeName>
        <fullName>RNase 1</fullName>
    </alternativeName>
    <alternativeName>
        <fullName>RNase A</fullName>
    </alternativeName>
</protein>
<sequence length="124" mass="13704">KESAAAKFERQHIDSSTSSVSSSNYCNEMMTSRNLTQDRCKPVNTFVHESLADVQAVCSQKNVACKNGQTNCYQSYSAMSITDCRETGNSKYPNCAYQTTQAEKHIIVACEGNPYVPVHYDASV</sequence>
<comment type="function">
    <text evidence="1">Endonuclease that catalyzes the cleavage of RNA on the 3' side of pyrimidine nucleotides. Acts on single-stranded and double-stranded RNA (By similarity).</text>
</comment>
<comment type="catalytic activity">
    <reaction>
        <text>an [RNA] containing cytidine + H2O = an [RNA]-3'-cytidine-3'-phosphate + a 5'-hydroxy-ribonucleotide-3'-[RNA].</text>
        <dbReference type="EC" id="4.6.1.18"/>
    </reaction>
</comment>
<comment type="catalytic activity">
    <reaction>
        <text>an [RNA] containing uridine + H2O = an [RNA]-3'-uridine-3'-phosphate + a 5'-hydroxy-ribonucleotide-3'-[RNA].</text>
        <dbReference type="EC" id="4.6.1.18"/>
    </reaction>
</comment>
<comment type="subunit">
    <text evidence="1">Monomer. Interacts with and forms tight 1:1 complexes with RNH1. Dimerization of two such complexes may occur. Interaction with RNH1 inhibits this protein (By similarity).</text>
</comment>
<comment type="subcellular location">
    <subcellularLocation>
        <location>Secreted</location>
    </subcellularLocation>
</comment>
<comment type="tissue specificity">
    <text>Pancreas.</text>
</comment>
<comment type="similarity">
    <text evidence="4">Belongs to the pancreatic ribonuclease family.</text>
</comment>
<gene>
    <name type="primary">RNASE1</name>
    <name type="synonym">RNS1</name>
</gene>
<reference key="1">
    <citation type="thesis" date="1975" institute="University of Groningen" country="Netherlands">
        <authorList>
            <person name="Gaastra W."/>
        </authorList>
    </citation>
    <scope>PROTEIN SEQUENCE</scope>
</reference>
<reference key="2">
    <citation type="journal article" date="1974" name="FEBS Lett.">
        <title>The primary structure of giraffe pancreatic ribonuclease.</title>
        <authorList>
            <person name="Gaastra W."/>
            <person name="Groen G."/>
            <person name="Welling G.W."/>
            <person name="Beintema J.J."/>
        </authorList>
    </citation>
    <scope>PROTEIN SEQUENCE</scope>
</reference>
<reference key="3">
    <citation type="journal article" date="1995" name="J. Mol. Evol.">
        <title>Molecular evolution of genes encoding ribonucleases in ruminant species.</title>
        <authorList>
            <person name="Confalone E."/>
            <person name="Beintema J.J."/>
            <person name="Sasso M.P."/>
            <person name="Carsana A."/>
            <person name="Palmieri M."/>
            <person name="Vento M.T."/>
            <person name="Furia A."/>
        </authorList>
    </citation>
    <scope>NUCLEOTIDE SEQUENCE [GENOMIC DNA]</scope>
</reference>
<reference key="4">
    <citation type="journal article" date="1993" name="J. Mol. Evol.">
        <title>Sequences related to the ox pancreatic ribonuclease coding region in the genomic DNA of mammalian species.</title>
        <authorList>
            <person name="Breukelman H.J."/>
            <person name="Beintema J.J."/>
            <person name="Confalone E."/>
            <person name="Costanzo C."/>
            <person name="Sasso M.P."/>
            <person name="Carsana A."/>
            <person name="Palmieri M."/>
            <person name="Furia A."/>
        </authorList>
    </citation>
    <scope>NUCLEOTIDE SEQUENCE [GENOMIC DNA] OF 31-114</scope>
</reference>
<dbReference type="EC" id="4.6.1.18"/>
<dbReference type="EMBL" id="S81739">
    <property type="protein sequence ID" value="AAB36133.1"/>
    <property type="molecule type" value="Genomic_DNA"/>
</dbReference>
<dbReference type="EMBL" id="S65127">
    <property type="protein sequence ID" value="AAB27932.1"/>
    <property type="molecule type" value="Genomic_DNA"/>
</dbReference>
<dbReference type="PIR" id="A94452">
    <property type="entry name" value="NRGF"/>
</dbReference>
<dbReference type="SMR" id="P00662"/>
<dbReference type="GlyCosmos" id="P00662">
    <property type="glycosylation" value="1 site, No reported glycans"/>
</dbReference>
<dbReference type="iPTMnet" id="P00662"/>
<dbReference type="GO" id="GO:0005576">
    <property type="term" value="C:extracellular region"/>
    <property type="evidence" value="ECO:0007669"/>
    <property type="project" value="UniProtKB-SubCell"/>
</dbReference>
<dbReference type="GO" id="GO:0016829">
    <property type="term" value="F:lyase activity"/>
    <property type="evidence" value="ECO:0007669"/>
    <property type="project" value="UniProtKB-KW"/>
</dbReference>
<dbReference type="GO" id="GO:0003676">
    <property type="term" value="F:nucleic acid binding"/>
    <property type="evidence" value="ECO:0007669"/>
    <property type="project" value="InterPro"/>
</dbReference>
<dbReference type="GO" id="GO:0004522">
    <property type="term" value="F:ribonuclease A activity"/>
    <property type="evidence" value="ECO:0007669"/>
    <property type="project" value="UniProtKB-EC"/>
</dbReference>
<dbReference type="GO" id="GO:0050830">
    <property type="term" value="P:defense response to Gram-positive bacterium"/>
    <property type="evidence" value="ECO:0007669"/>
    <property type="project" value="TreeGrafter"/>
</dbReference>
<dbReference type="CDD" id="cd06265">
    <property type="entry name" value="RNase_A_canonical"/>
    <property type="match status" value="1"/>
</dbReference>
<dbReference type="FunFam" id="3.10.130.10:FF:000001">
    <property type="entry name" value="Ribonuclease pancreatic"/>
    <property type="match status" value="1"/>
</dbReference>
<dbReference type="Gene3D" id="3.10.130.10">
    <property type="entry name" value="Ribonuclease A-like domain"/>
    <property type="match status" value="1"/>
</dbReference>
<dbReference type="InterPro" id="IPR001427">
    <property type="entry name" value="RNaseA"/>
</dbReference>
<dbReference type="InterPro" id="IPR036816">
    <property type="entry name" value="RNaseA-like_dom_sf"/>
</dbReference>
<dbReference type="InterPro" id="IPR023411">
    <property type="entry name" value="RNaseA_AS"/>
</dbReference>
<dbReference type="InterPro" id="IPR023412">
    <property type="entry name" value="RNaseA_domain"/>
</dbReference>
<dbReference type="PANTHER" id="PTHR11437">
    <property type="entry name" value="RIBONUCLEASE"/>
    <property type="match status" value="1"/>
</dbReference>
<dbReference type="PANTHER" id="PTHR11437:SF24">
    <property type="entry name" value="RIBONUCLEASE PANCREATIC"/>
    <property type="match status" value="1"/>
</dbReference>
<dbReference type="Pfam" id="PF00074">
    <property type="entry name" value="RnaseA"/>
    <property type="match status" value="1"/>
</dbReference>
<dbReference type="PRINTS" id="PR00794">
    <property type="entry name" value="RIBONUCLEASE"/>
</dbReference>
<dbReference type="SMART" id="SM00092">
    <property type="entry name" value="RNAse_Pc"/>
    <property type="match status" value="1"/>
</dbReference>
<dbReference type="SUPFAM" id="SSF54076">
    <property type="entry name" value="RNase A-like"/>
    <property type="match status" value="1"/>
</dbReference>
<dbReference type="PROSITE" id="PS00127">
    <property type="entry name" value="RNASE_PANCREATIC"/>
    <property type="match status" value="1"/>
</dbReference>
<keyword id="KW-0903">Direct protein sequencing</keyword>
<keyword id="KW-1015">Disulfide bond</keyword>
<keyword id="KW-0255">Endonuclease</keyword>
<keyword id="KW-0325">Glycoprotein</keyword>
<keyword id="KW-0378">Hydrolase</keyword>
<keyword id="KW-0456">Lyase</keyword>
<keyword id="KW-0540">Nuclease</keyword>
<keyword id="KW-0964">Secreted</keyword>
<feature type="chain" id="PRO_0000057198" description="Ribonuclease pancreatic">
    <location>
        <begin position="1"/>
        <end position="124"/>
    </location>
</feature>
<feature type="region of interest" description="Disordered" evidence="2">
    <location>
        <begin position="1"/>
        <end position="23"/>
    </location>
</feature>
<feature type="compositionally biased region" description="Basic and acidic residues" evidence="2">
    <location>
        <begin position="1"/>
        <end position="13"/>
    </location>
</feature>
<feature type="active site" description="Proton acceptor" evidence="1">
    <location>
        <position position="12"/>
    </location>
</feature>
<feature type="active site" description="Proton donor" evidence="1">
    <location>
        <position position="119"/>
    </location>
</feature>
<feature type="binding site" evidence="1">
    <location>
        <position position="7"/>
    </location>
    <ligand>
        <name>substrate</name>
    </ligand>
</feature>
<feature type="binding site" evidence="1">
    <location>
        <position position="10"/>
    </location>
    <ligand>
        <name>substrate</name>
    </ligand>
</feature>
<feature type="binding site" evidence="1">
    <location>
        <begin position="41"/>
        <end position="45"/>
    </location>
    <ligand>
        <name>substrate</name>
    </ligand>
</feature>
<feature type="binding site" evidence="1">
    <location>
        <position position="66"/>
    </location>
    <ligand>
        <name>substrate</name>
    </ligand>
</feature>
<feature type="binding site" evidence="1">
    <location>
        <position position="85"/>
    </location>
    <ligand>
        <name>substrate</name>
    </ligand>
</feature>
<feature type="glycosylation site" description="N-linked (GlcNAc...) asparagine" evidence="3">
    <location>
        <position position="34"/>
    </location>
</feature>
<feature type="disulfide bond" evidence="1">
    <location>
        <begin position="26"/>
        <end position="84"/>
    </location>
</feature>
<feature type="disulfide bond" evidence="1">
    <location>
        <begin position="40"/>
        <end position="95"/>
    </location>
</feature>
<feature type="disulfide bond" evidence="1">
    <location>
        <begin position="58"/>
        <end position="110"/>
    </location>
</feature>
<feature type="disulfide bond" evidence="1">
    <location>
        <begin position="65"/>
        <end position="72"/>
    </location>
</feature>
<feature type="sequence variant">
    <original>Y</original>
    <variation>N</variation>
    <location>
        <position position="76"/>
    </location>
</feature>
<feature type="sequence conflict" description="In Ref. 1; AA sequence and 2; AA sequence." evidence="4" ref="1 2">
    <original>E</original>
    <variation>Q</variation>
    <location>
        <position position="28"/>
    </location>
</feature>
<accession>P00662</accession>
<accession>Q29534</accession>
<accession>Q29541</accession>
<organism>
    <name type="scientific">Giraffa camelopardalis</name>
    <name type="common">Giraffe</name>
    <dbReference type="NCBI Taxonomy" id="9894"/>
    <lineage>
        <taxon>Eukaryota</taxon>
        <taxon>Metazoa</taxon>
        <taxon>Chordata</taxon>
        <taxon>Craniata</taxon>
        <taxon>Vertebrata</taxon>
        <taxon>Euteleostomi</taxon>
        <taxon>Mammalia</taxon>
        <taxon>Eutheria</taxon>
        <taxon>Laurasiatheria</taxon>
        <taxon>Artiodactyla</taxon>
        <taxon>Ruminantia</taxon>
        <taxon>Pecora</taxon>
        <taxon>Giraffidae</taxon>
        <taxon>Giraffa</taxon>
    </lineage>
</organism>
<name>RNAS1_GIRCA</name>
<evidence type="ECO:0000250" key="1"/>
<evidence type="ECO:0000256" key="2">
    <source>
        <dbReference type="SAM" id="MobiDB-lite"/>
    </source>
</evidence>
<evidence type="ECO:0000269" key="3">
    <source>
    </source>
</evidence>
<evidence type="ECO:0000305" key="4"/>